<evidence type="ECO:0000255" key="1">
    <source>
        <dbReference type="HAMAP-Rule" id="MF_00272"/>
    </source>
</evidence>
<evidence type="ECO:0000255" key="2">
    <source>
        <dbReference type="PROSITE-ProRule" id="PRU01066"/>
    </source>
</evidence>
<gene>
    <name evidence="1" type="primary">gcvH</name>
    <name type="ordered locus">SCH_2995</name>
</gene>
<name>GCSH_SALCH</name>
<comment type="function">
    <text evidence="1">The glycine cleavage system catalyzes the degradation of glycine. The H protein shuttles the methylamine group of glycine from the P protein to the T protein.</text>
</comment>
<comment type="cofactor">
    <cofactor evidence="1">
        <name>(R)-lipoate</name>
        <dbReference type="ChEBI" id="CHEBI:83088"/>
    </cofactor>
    <text evidence="1">Binds 1 lipoyl cofactor covalently.</text>
</comment>
<comment type="subunit">
    <text evidence="1">The glycine cleavage system is composed of four proteins: P, T, L and H.</text>
</comment>
<comment type="similarity">
    <text evidence="1">Belongs to the GcvH family.</text>
</comment>
<organism>
    <name type="scientific">Salmonella choleraesuis (strain SC-B67)</name>
    <dbReference type="NCBI Taxonomy" id="321314"/>
    <lineage>
        <taxon>Bacteria</taxon>
        <taxon>Pseudomonadati</taxon>
        <taxon>Pseudomonadota</taxon>
        <taxon>Gammaproteobacteria</taxon>
        <taxon>Enterobacterales</taxon>
        <taxon>Enterobacteriaceae</taxon>
        <taxon>Salmonella</taxon>
    </lineage>
</organism>
<protein>
    <recommendedName>
        <fullName evidence="1">Glycine cleavage system H protein</fullName>
    </recommendedName>
</protein>
<reference key="1">
    <citation type="journal article" date="2005" name="Nucleic Acids Res.">
        <title>The genome sequence of Salmonella enterica serovar Choleraesuis, a highly invasive and resistant zoonotic pathogen.</title>
        <authorList>
            <person name="Chiu C.-H."/>
            <person name="Tang P."/>
            <person name="Chu C."/>
            <person name="Hu S."/>
            <person name="Bao Q."/>
            <person name="Yu J."/>
            <person name="Chou Y.-Y."/>
            <person name="Wang H.-S."/>
            <person name="Lee Y.-S."/>
        </authorList>
    </citation>
    <scope>NUCLEOTIDE SEQUENCE [LARGE SCALE GENOMIC DNA]</scope>
    <source>
        <strain>SC-B67</strain>
    </source>
</reference>
<keyword id="KW-0450">Lipoyl</keyword>
<feature type="chain" id="PRO_0000302427" description="Glycine cleavage system H protein">
    <location>
        <begin position="1"/>
        <end position="129"/>
    </location>
</feature>
<feature type="domain" description="Lipoyl-binding" evidence="2">
    <location>
        <begin position="24"/>
        <end position="106"/>
    </location>
</feature>
<feature type="modified residue" description="N6-lipoyllysine" evidence="1">
    <location>
        <position position="65"/>
    </location>
</feature>
<sequence length="129" mass="13841">MSNVPAELKYSKEHEWLRKEADGTYTVGITEHAQELLGDMVFVDLPEVGATVSAGDDCAVAESVKAASDIYAPVSGEIVAVNDALSDSPELVNSEPYTGGWIFKIKASDESELESLLDATAYEALLEDE</sequence>
<dbReference type="EMBL" id="AE017220">
    <property type="protein sequence ID" value="AAX66901.1"/>
    <property type="molecule type" value="Genomic_DNA"/>
</dbReference>
<dbReference type="RefSeq" id="WP_000073211.1">
    <property type="nucleotide sequence ID" value="NC_006905.1"/>
</dbReference>
<dbReference type="SMR" id="Q57K61"/>
<dbReference type="KEGG" id="sec:SCH_2995"/>
<dbReference type="HOGENOM" id="CLU_097408_2_1_6"/>
<dbReference type="Proteomes" id="UP000000538">
    <property type="component" value="Chromosome"/>
</dbReference>
<dbReference type="GO" id="GO:0005829">
    <property type="term" value="C:cytosol"/>
    <property type="evidence" value="ECO:0007669"/>
    <property type="project" value="TreeGrafter"/>
</dbReference>
<dbReference type="GO" id="GO:0005960">
    <property type="term" value="C:glycine cleavage complex"/>
    <property type="evidence" value="ECO:0007669"/>
    <property type="project" value="InterPro"/>
</dbReference>
<dbReference type="GO" id="GO:0019464">
    <property type="term" value="P:glycine decarboxylation via glycine cleavage system"/>
    <property type="evidence" value="ECO:0007669"/>
    <property type="project" value="UniProtKB-UniRule"/>
</dbReference>
<dbReference type="CDD" id="cd06848">
    <property type="entry name" value="GCS_H"/>
    <property type="match status" value="1"/>
</dbReference>
<dbReference type="FunFam" id="2.40.50.100:FF:000011">
    <property type="entry name" value="Glycine cleavage system H protein"/>
    <property type="match status" value="1"/>
</dbReference>
<dbReference type="Gene3D" id="2.40.50.100">
    <property type="match status" value="1"/>
</dbReference>
<dbReference type="HAMAP" id="MF_00272">
    <property type="entry name" value="GcvH"/>
    <property type="match status" value="1"/>
</dbReference>
<dbReference type="InterPro" id="IPR003016">
    <property type="entry name" value="2-oxoA_DH_lipoyl-BS"/>
</dbReference>
<dbReference type="InterPro" id="IPR000089">
    <property type="entry name" value="Biotin_lipoyl"/>
</dbReference>
<dbReference type="InterPro" id="IPR002930">
    <property type="entry name" value="GCV_H"/>
</dbReference>
<dbReference type="InterPro" id="IPR033753">
    <property type="entry name" value="GCV_H/Fam206"/>
</dbReference>
<dbReference type="InterPro" id="IPR017453">
    <property type="entry name" value="GCV_H_sub"/>
</dbReference>
<dbReference type="InterPro" id="IPR011053">
    <property type="entry name" value="Single_hybrid_motif"/>
</dbReference>
<dbReference type="NCBIfam" id="TIGR00527">
    <property type="entry name" value="gcvH"/>
    <property type="match status" value="1"/>
</dbReference>
<dbReference type="NCBIfam" id="NF002270">
    <property type="entry name" value="PRK01202.1"/>
    <property type="match status" value="1"/>
</dbReference>
<dbReference type="PANTHER" id="PTHR11715">
    <property type="entry name" value="GLYCINE CLEAVAGE SYSTEM H PROTEIN"/>
    <property type="match status" value="1"/>
</dbReference>
<dbReference type="PANTHER" id="PTHR11715:SF3">
    <property type="entry name" value="GLYCINE CLEAVAGE SYSTEM H PROTEIN-RELATED"/>
    <property type="match status" value="1"/>
</dbReference>
<dbReference type="Pfam" id="PF01597">
    <property type="entry name" value="GCV_H"/>
    <property type="match status" value="1"/>
</dbReference>
<dbReference type="SUPFAM" id="SSF51230">
    <property type="entry name" value="Single hybrid motif"/>
    <property type="match status" value="1"/>
</dbReference>
<dbReference type="PROSITE" id="PS50968">
    <property type="entry name" value="BIOTINYL_LIPOYL"/>
    <property type="match status" value="1"/>
</dbReference>
<dbReference type="PROSITE" id="PS00189">
    <property type="entry name" value="LIPOYL"/>
    <property type="match status" value="1"/>
</dbReference>
<proteinExistence type="inferred from homology"/>
<accession>Q57K61</accession>